<evidence type="ECO:0000250" key="1"/>
<evidence type="ECO:0000269" key="2">
    <source>
    </source>
</evidence>
<evidence type="ECO:0000269" key="3">
    <source>
    </source>
</evidence>
<evidence type="ECO:0000269" key="4">
    <source>
    </source>
</evidence>
<evidence type="ECO:0000269" key="5">
    <source>
    </source>
</evidence>
<evidence type="ECO:0000303" key="6">
    <source>
    </source>
</evidence>
<evidence type="ECO:0000303" key="7">
    <source>
    </source>
</evidence>
<evidence type="ECO:0000303" key="8">
    <source ref="1"/>
</evidence>
<evidence type="ECO:0000303" key="9">
    <source ref="2"/>
</evidence>
<evidence type="ECO:0000305" key="10"/>
<dbReference type="EMBL" id="AB070270">
    <property type="protein sequence ID" value="BAB85128.1"/>
    <property type="molecule type" value="mRNA"/>
</dbReference>
<dbReference type="EMBL" id="AF419858">
    <property type="protein sequence ID" value="AAP97293.1"/>
    <property type="molecule type" value="mRNA"/>
</dbReference>
<dbReference type="EMBL" id="BC020249">
    <property type="protein sequence ID" value="AAH20249.1"/>
    <property type="molecule type" value="mRNA"/>
</dbReference>
<dbReference type="EMBL" id="BC050393">
    <property type="protein sequence ID" value="AAH50393.1"/>
    <property type="molecule type" value="mRNA"/>
</dbReference>
<dbReference type="EMBL" id="AF174605">
    <property type="protein sequence ID" value="AAF04526.1"/>
    <property type="molecule type" value="mRNA"/>
</dbReference>
<dbReference type="CCDS" id="CCDS5952.1">
    <molecule id="Q8TCJ0-2"/>
</dbReference>
<dbReference type="CCDS" id="CCDS5953.1">
    <molecule id="Q8TCJ0-1"/>
</dbReference>
<dbReference type="CCDS" id="CCDS5954.1">
    <molecule id="Q8TCJ0-3"/>
</dbReference>
<dbReference type="RefSeq" id="NP_036305.2">
    <molecule id="Q8TCJ0-3"/>
    <property type="nucleotide sequence ID" value="NM_012173.3"/>
</dbReference>
<dbReference type="RefSeq" id="NP_904356.1">
    <molecule id="Q8TCJ0-2"/>
    <property type="nucleotide sequence ID" value="NM_183420.2"/>
</dbReference>
<dbReference type="RefSeq" id="NP_904357.1">
    <molecule id="Q8TCJ0-1"/>
    <property type="nucleotide sequence ID" value="NM_183421.2"/>
</dbReference>
<dbReference type="RefSeq" id="XP_011533050.1">
    <molecule id="Q8TCJ0-1"/>
    <property type="nucleotide sequence ID" value="XM_011534748.4"/>
</dbReference>
<dbReference type="RefSeq" id="XP_016868802.1">
    <molecule id="Q8TCJ0-1"/>
    <property type="nucleotide sequence ID" value="XM_017013313.3"/>
</dbReference>
<dbReference type="RefSeq" id="XP_024302891.1">
    <molecule id="Q8TCJ0-2"/>
    <property type="nucleotide sequence ID" value="XM_024447123.2"/>
</dbReference>
<dbReference type="RefSeq" id="XP_024302892.1">
    <molecule id="Q8TCJ0-2"/>
    <property type="nucleotide sequence ID" value="XM_024447124.2"/>
</dbReference>
<dbReference type="RefSeq" id="XP_047277639.1">
    <molecule id="Q8TCJ0-1"/>
    <property type="nucleotide sequence ID" value="XM_047421683.1"/>
</dbReference>
<dbReference type="RefSeq" id="XP_047277640.1">
    <molecule id="Q8TCJ0-2"/>
    <property type="nucleotide sequence ID" value="XM_047421684.1"/>
</dbReference>
<dbReference type="BioGRID" id="117646">
    <property type="interactions" value="197"/>
</dbReference>
<dbReference type="ComplexPortal" id="CPX-7965">
    <property type="entry name" value="SCF E3 ubiquitin ligase complex, FBXO25 variant"/>
</dbReference>
<dbReference type="FunCoup" id="Q8TCJ0">
    <property type="interactions" value="823"/>
</dbReference>
<dbReference type="IntAct" id="Q8TCJ0">
    <property type="interactions" value="17"/>
</dbReference>
<dbReference type="STRING" id="9606.ENSP00000372274"/>
<dbReference type="iPTMnet" id="Q8TCJ0"/>
<dbReference type="PhosphoSitePlus" id="Q8TCJ0"/>
<dbReference type="BioMuta" id="FBXO25"/>
<dbReference type="jPOST" id="Q8TCJ0"/>
<dbReference type="MassIVE" id="Q8TCJ0"/>
<dbReference type="PaxDb" id="9606-ENSP00000372274"/>
<dbReference type="PeptideAtlas" id="Q8TCJ0"/>
<dbReference type="ProteomicsDB" id="74143">
    <molecule id="Q8TCJ0-1"/>
</dbReference>
<dbReference type="ProteomicsDB" id="74144">
    <molecule id="Q8TCJ0-2"/>
</dbReference>
<dbReference type="ProteomicsDB" id="74145">
    <molecule id="Q8TCJ0-3"/>
</dbReference>
<dbReference type="Antibodypedia" id="21946">
    <property type="antibodies" value="152 antibodies from 22 providers"/>
</dbReference>
<dbReference type="DNASU" id="26260"/>
<dbReference type="Ensembl" id="ENST00000276326.9">
    <molecule id="Q8TCJ0-3"/>
    <property type="protein sequence ID" value="ENSP00000276326.6"/>
    <property type="gene ID" value="ENSG00000147364.17"/>
</dbReference>
<dbReference type="Ensembl" id="ENST00000350302.8">
    <molecule id="Q8TCJ0-2"/>
    <property type="protein sequence ID" value="ENSP00000342077.4"/>
    <property type="gene ID" value="ENSG00000147364.17"/>
</dbReference>
<dbReference type="Ensembl" id="ENST00000352684.2">
    <molecule id="Q8TCJ0-3"/>
    <property type="protein sequence ID" value="ENSP00000341345.2"/>
    <property type="gene ID" value="ENSG00000147364.17"/>
</dbReference>
<dbReference type="Ensembl" id="ENST00000382824.5">
    <molecule id="Q8TCJ0-1"/>
    <property type="protein sequence ID" value="ENSP00000372274.2"/>
    <property type="gene ID" value="ENSG00000147364.17"/>
</dbReference>
<dbReference type="GeneID" id="26260"/>
<dbReference type="KEGG" id="hsa:26260"/>
<dbReference type="MANE-Select" id="ENST00000350302.8">
    <molecule id="Q8TCJ0-2"/>
    <property type="protein sequence ID" value="ENSP00000342077.4"/>
    <property type="RefSeq nucleotide sequence ID" value="NM_183420.2"/>
    <property type="RefSeq protein sequence ID" value="NP_904356.1"/>
</dbReference>
<dbReference type="UCSC" id="uc003woy.4">
    <molecule id="Q8TCJ0-1"/>
    <property type="organism name" value="human"/>
</dbReference>
<dbReference type="AGR" id="HGNC:13596"/>
<dbReference type="CTD" id="26260"/>
<dbReference type="DisGeNET" id="26260"/>
<dbReference type="GeneCards" id="FBXO25"/>
<dbReference type="HGNC" id="HGNC:13596">
    <property type="gene designation" value="FBXO25"/>
</dbReference>
<dbReference type="HPA" id="ENSG00000147364">
    <property type="expression patterns" value="Tissue enhanced (testis)"/>
</dbReference>
<dbReference type="MIM" id="609098">
    <property type="type" value="gene"/>
</dbReference>
<dbReference type="neXtProt" id="NX_Q8TCJ0"/>
<dbReference type="OpenTargets" id="ENSG00000147364"/>
<dbReference type="PharmGKB" id="PA28038"/>
<dbReference type="VEuPathDB" id="HostDB:ENSG00000147364"/>
<dbReference type="eggNOG" id="KOG3926">
    <property type="taxonomic scope" value="Eukaryota"/>
</dbReference>
<dbReference type="GeneTree" id="ENSGT00390000004915"/>
<dbReference type="HOGENOM" id="CLU_065667_0_0_1"/>
<dbReference type="InParanoid" id="Q8TCJ0"/>
<dbReference type="OMA" id="AWDTMAK"/>
<dbReference type="OrthoDB" id="9991467at2759"/>
<dbReference type="PAN-GO" id="Q8TCJ0">
    <property type="GO annotations" value="4 GO annotations based on evolutionary models"/>
</dbReference>
<dbReference type="PhylomeDB" id="Q8TCJ0"/>
<dbReference type="TreeFam" id="TF313070"/>
<dbReference type="PathwayCommons" id="Q8TCJ0"/>
<dbReference type="SignaLink" id="Q8TCJ0"/>
<dbReference type="SIGNOR" id="Q8TCJ0"/>
<dbReference type="UniPathway" id="UPA00143"/>
<dbReference type="BioGRID-ORCS" id="26260">
    <property type="hits" value="18 hits in 1200 CRISPR screens"/>
</dbReference>
<dbReference type="ChiTaRS" id="FBXO25">
    <property type="organism name" value="human"/>
</dbReference>
<dbReference type="GenomeRNAi" id="26260"/>
<dbReference type="Pharos" id="Q8TCJ0">
    <property type="development level" value="Tbio"/>
</dbReference>
<dbReference type="PRO" id="PR:Q8TCJ0"/>
<dbReference type="Proteomes" id="UP000005640">
    <property type="component" value="Chromosome 8"/>
</dbReference>
<dbReference type="RNAct" id="Q8TCJ0">
    <property type="molecule type" value="protein"/>
</dbReference>
<dbReference type="Bgee" id="ENSG00000147364">
    <property type="expression patterns" value="Expressed in left testis and 185 other cell types or tissues"/>
</dbReference>
<dbReference type="ExpressionAtlas" id="Q8TCJ0">
    <property type="expression patterns" value="baseline and differential"/>
</dbReference>
<dbReference type="GO" id="GO:0005737">
    <property type="term" value="C:cytoplasm"/>
    <property type="evidence" value="ECO:0000318"/>
    <property type="project" value="GO_Central"/>
</dbReference>
<dbReference type="GO" id="GO:0005634">
    <property type="term" value="C:nucleus"/>
    <property type="evidence" value="ECO:0000314"/>
    <property type="project" value="ParkinsonsUK-UCL"/>
</dbReference>
<dbReference type="GO" id="GO:0019005">
    <property type="term" value="C:SCF ubiquitin ligase complex"/>
    <property type="evidence" value="ECO:0000250"/>
    <property type="project" value="UniProtKB"/>
</dbReference>
<dbReference type="GO" id="GO:0000151">
    <property type="term" value="C:ubiquitin ligase complex"/>
    <property type="evidence" value="ECO:0000303"/>
    <property type="project" value="UniProtKB"/>
</dbReference>
<dbReference type="GO" id="GO:0003779">
    <property type="term" value="F:actin binding"/>
    <property type="evidence" value="ECO:0007669"/>
    <property type="project" value="UniProtKB-KW"/>
</dbReference>
<dbReference type="GO" id="GO:0004842">
    <property type="term" value="F:ubiquitin-protein transferase activity"/>
    <property type="evidence" value="ECO:0000303"/>
    <property type="project" value="UniProtKB"/>
</dbReference>
<dbReference type="GO" id="GO:0016567">
    <property type="term" value="P:protein ubiquitination"/>
    <property type="evidence" value="ECO:0000250"/>
    <property type="project" value="UniProtKB"/>
</dbReference>
<dbReference type="CDD" id="cd22099">
    <property type="entry name" value="F-box_FBXO25"/>
    <property type="match status" value="1"/>
</dbReference>
<dbReference type="Gene3D" id="1.20.1280.50">
    <property type="match status" value="1"/>
</dbReference>
<dbReference type="InterPro" id="IPR036047">
    <property type="entry name" value="F-box-like_dom_sf"/>
</dbReference>
<dbReference type="InterPro" id="IPR040394">
    <property type="entry name" value="FBX25/32"/>
</dbReference>
<dbReference type="PANTHER" id="PTHR13123:SF8">
    <property type="entry name" value="F-BOX ONLY PROTEIN 25"/>
    <property type="match status" value="1"/>
</dbReference>
<dbReference type="PANTHER" id="PTHR13123">
    <property type="entry name" value="LD30288P"/>
    <property type="match status" value="1"/>
</dbReference>
<dbReference type="SUPFAM" id="SSF81383">
    <property type="entry name" value="F-box domain"/>
    <property type="match status" value="1"/>
</dbReference>
<comment type="function">
    <text evidence="1">Substrate-recognition component of the SCF (SKP1-CUL1-F-box protein)-type E3 ubiquitin ligase complex. May play a role in accumulation of expanded polyglutamine (polyQ) protein huntingtin (HTT) (By similarity).</text>
</comment>
<comment type="pathway">
    <text>Protein modification; protein ubiquitination.</text>
</comment>
<comment type="subunit">
    <text evidence="3 5">Part of a SCF (SKP1-cullin-F-box) protein ligase complex consisting of FBXO25, SKP1, CUL1 and RBX1. Interacts directly with SKP1 and CUL1. Interacts (via C-terminus) with beta-actin (via N-terminus).</text>
</comment>
<comment type="interaction">
    <interactant intactId="EBI-6264551">
        <id>Q8TCJ0-2</id>
    </interactant>
    <interactant intactId="EBI-353944">
        <id>P60709</id>
        <label>ACTB</label>
    </interactant>
    <organismsDiffer>false</organismsDiffer>
    <experiments>3</experiments>
</comment>
<comment type="interaction">
    <interactant intactId="EBI-6262578">
        <id>Q8TCJ0-3</id>
    </interactant>
    <interactant intactId="EBI-748312">
        <id>P49821</id>
        <label>NDUFV1</label>
    </interactant>
    <organismsDiffer>false</organismsDiffer>
    <experiments>3</experiments>
</comment>
<comment type="interaction">
    <interactant intactId="EBI-6262578">
        <id>Q8TCJ0-3</id>
    </interactant>
    <interactant intactId="EBI-307486">
        <id>P63208</id>
        <label>SKP1</label>
    </interactant>
    <organismsDiffer>false</organismsDiffer>
    <experiments>4</experiments>
</comment>
<comment type="subcellular location">
    <subcellularLocation>
        <location evidence="3 4">Nucleus</location>
    </subcellularLocation>
    <text>In the nucleus, associates with a subnuclear dot-like structure. Colocalized with SKP1.</text>
</comment>
<comment type="alternative products">
    <event type="alternative splicing"/>
    <isoform>
        <id>Q8TCJ0-1</id>
        <name>1</name>
        <sequence type="displayed"/>
    </isoform>
    <isoform>
        <id>Q8TCJ0-2</id>
        <name>2</name>
        <sequence type="described" ref="VSP_007374"/>
    </isoform>
    <isoform>
        <id>Q8TCJ0-3</id>
        <name>3</name>
        <sequence type="described" ref="VSP_013060 VSP_013061 VSP_007374"/>
    </isoform>
</comment>
<comment type="tissue specificity">
    <text evidence="3">Expressed in all brain tissue observed.</text>
</comment>
<comment type="domain">
    <text evidence="1">The F-box is necessary for the interaction with SKP1.</text>
</comment>
<comment type="disease">
    <text>A chromosomal aberration involving FBXO25 is a cause of X-linked intellectual disability (XLID). Translocation t(X;8)(p11.22;p23.3) with SHROOM4.</text>
</comment>
<protein>
    <recommendedName>
        <fullName>F-box only protein 25</fullName>
    </recommendedName>
</protein>
<organism>
    <name type="scientific">Homo sapiens</name>
    <name type="common">Human</name>
    <dbReference type="NCBI Taxonomy" id="9606"/>
    <lineage>
        <taxon>Eukaryota</taxon>
        <taxon>Metazoa</taxon>
        <taxon>Chordata</taxon>
        <taxon>Craniata</taxon>
        <taxon>Vertebrata</taxon>
        <taxon>Euteleostomi</taxon>
        <taxon>Mammalia</taxon>
        <taxon>Eutheria</taxon>
        <taxon>Euarchontoglires</taxon>
        <taxon>Primates</taxon>
        <taxon>Haplorrhini</taxon>
        <taxon>Catarrhini</taxon>
        <taxon>Hominidae</taxon>
        <taxon>Homo</taxon>
    </lineage>
</organism>
<gene>
    <name type="primary">FBXO25</name>
    <name type="synonym">FBX25</name>
</gene>
<feature type="chain" id="PRO_0000119911" description="F-box only protein 25">
    <location>
        <begin position="1"/>
        <end position="367"/>
    </location>
</feature>
<feature type="domain" description="F-box">
    <location>
        <begin position="226"/>
        <end position="274"/>
    </location>
</feature>
<feature type="region of interest" description="Interaction with beta-actin">
    <location>
        <begin position="1"/>
        <end position="83"/>
    </location>
</feature>
<feature type="splice variant" id="VSP_013060" description="In isoform 3." evidence="7">
    <location>
        <begin position="1"/>
        <end position="67"/>
    </location>
</feature>
<feature type="splice variant" id="VSP_013061" description="In isoform 3." evidence="7">
    <original>KKDHFRNDTNTQSFYREKWIYVHKESTKE</original>
    <variation>MEKYSIMKSMNMHRKKGKRTILEMTQILK</variation>
    <location>
        <begin position="68"/>
        <end position="96"/>
    </location>
</feature>
<feature type="splice variant" id="VSP_007374" description="In isoform 2 and isoform 3." evidence="6 7 8 9">
    <location>
        <begin position="331"/>
        <end position="339"/>
    </location>
</feature>
<feature type="sequence variant" id="VAR_049043" description="In dbSNP:rs17665340.">
    <original>N</original>
    <variation>D</variation>
    <location>
        <position position="36"/>
    </location>
</feature>
<feature type="sequence variant" id="VAR_061167" description="In dbSNP:rs10090550." evidence="2">
    <original>R</original>
    <variation>H</variation>
    <location>
        <position position="38"/>
    </location>
</feature>
<feature type="mutagenesis site" description="Loss of SKP1-binding." evidence="3">
    <original>S</original>
    <variation>L</variation>
    <location>
        <position position="244"/>
    </location>
</feature>
<feature type="sequence conflict" description="In Ref. 4; AAF04526." evidence="10" ref="4">
    <original>IYVHKESTKE</original>
    <variation>LILTSVLLFQ</variation>
    <location>
        <begin position="87"/>
        <end position="96"/>
    </location>
</feature>
<feature type="sequence conflict" description="In Ref. 4; AAF04526." evidence="10" ref="4">
    <original>R</original>
    <variation>T</variation>
    <location>
        <position position="121"/>
    </location>
</feature>
<keyword id="KW-0009">Actin-binding</keyword>
<keyword id="KW-0025">Alternative splicing</keyword>
<keyword id="KW-0160">Chromosomal rearrangement</keyword>
<keyword id="KW-0903">Direct protein sequencing</keyword>
<keyword id="KW-0539">Nucleus</keyword>
<keyword id="KW-1267">Proteomics identification</keyword>
<keyword id="KW-1185">Reference proteome</keyword>
<keyword id="KW-0833">Ubl conjugation pathway</keyword>
<proteinExistence type="evidence at protein level"/>
<sequence length="367" mass="43313">MPFLGQDWRSPGWSWIKTEDGWKRCESCSQKLERENNRCNISHSIILNSEDGEIFNNEEHEYASKKRKKDHFRNDTNTQSFYREKWIYVHKESTKERHGYCTLGEAFNRLDFSSAIQDIRRFNYVVKLLQLIAKSQLTSLSGVAQKNYFNILDKIVQKVLDDHHNPRLIKDLLQDLSSTLCILIRGVGKSVLVGNINIWICRLETILAWQQQLQDLQMTKQVNNGLTLSDLPLHMLNNILYRFSDGWDIITLGQVTPTLYMLSEDRQLWKKLCQYHFAEKQFCRHLILSEKGHIEWKLMYFALQKHYPAKEQYGDTLHFCRHCSILFWKDYHLALLFKDSGHPCTAADPDSCFTPVSPQHFIDLFKF</sequence>
<reference key="1">
    <citation type="submission" date="2002-02" db="EMBL/GenBank/DDBJ databases">
        <title>Expression of Fbx25-containing protein in prostate cancer tissues.</title>
        <authorList>
            <person name="Tsujiawa K."/>
            <person name="Mitsui E."/>
            <person name="Ono Y."/>
            <person name="Sakamoto K."/>
            <person name="Konishi N."/>
            <person name="Yamamoto H."/>
        </authorList>
    </citation>
    <scope>NUCLEOTIDE SEQUENCE [MRNA] (ISOFORM 2)</scope>
    <source>
        <tissue>Prostatic carcinoma</tissue>
    </source>
</reference>
<reference key="2">
    <citation type="submission" date="2001-09" db="EMBL/GenBank/DDBJ databases">
        <authorList>
            <person name="Guo J.H."/>
            <person name="She X.Y."/>
            <person name="Yu L."/>
        </authorList>
    </citation>
    <scope>NUCLEOTIDE SEQUENCE [LARGE SCALE MRNA] (ISOFORM 2)</scope>
</reference>
<reference key="3">
    <citation type="journal article" date="2004" name="Genome Res.">
        <title>The status, quality, and expansion of the NIH full-length cDNA project: the Mammalian Gene Collection (MGC).</title>
        <authorList>
            <consortium name="The MGC Project Team"/>
        </authorList>
    </citation>
    <scope>NUCLEOTIDE SEQUENCE [LARGE SCALE MRNA] (ISOFORMS 1 AND 3)</scope>
    <scope>VARIANT HIS-38</scope>
    <source>
        <tissue>Brain</tissue>
        <tissue>Placenta</tissue>
    </source>
</reference>
<reference key="4">
    <citation type="journal article" date="1999" name="Curr. Biol.">
        <title>Identification of a family of human F-box proteins.</title>
        <authorList>
            <person name="Cenciarelli C."/>
            <person name="Chiaur D.S."/>
            <person name="Guardavaccaro D."/>
            <person name="Parks W."/>
            <person name="Vidal M."/>
            <person name="Pagano M."/>
        </authorList>
    </citation>
    <scope>NUCLEOTIDE SEQUENCE [MRNA] OF 87-367 (ISOFORM 2)</scope>
</reference>
<reference key="5">
    <citation type="journal article" date="2010" name="Proteomics">
        <title>Identification of FBXO25-interacting proteins using an integrated proteomics approach.</title>
        <authorList>
            <person name="Teixeira F.R."/>
            <person name="Yokoo S."/>
            <person name="Gartner C.A."/>
            <person name="Manfiolli A.O."/>
            <person name="Baqui M.M."/>
            <person name="Assmann E.M."/>
            <person name="Maragno A.L."/>
            <person name="Yu H."/>
            <person name="de Lanerolle P."/>
            <person name="Kobarg J."/>
            <person name="Gygi S.P."/>
            <person name="Gomes M.D."/>
        </authorList>
    </citation>
    <scope>PROTEIN SEQUENCE OF 110-120; 135-146; 147-154; 190-202 AND 339-366</scope>
    <scope>INTERACTION WITH BETA-ACTIN AND SKP1</scope>
    <scope>IDENTIFICATION IN A SCF PROTEIN LIGASE COMPLEX</scope>
    <scope>IDENTIFICATION BY MASS SPECTROMETRY</scope>
</reference>
<reference key="6">
    <citation type="journal article" date="2006" name="Biochim. Biophys. Acta">
        <title>Characterization of FBX25, encoding a novel brain-expressed F-box protein.</title>
        <authorList>
            <person name="Hagens O."/>
            <person name="Minina E."/>
            <person name="Schweiger S."/>
            <person name="Ropers H.-H."/>
            <person name="Kalscheuer V."/>
        </authorList>
    </citation>
    <scope>INTERACTION WITH SKP1 AND CUL1</scope>
    <scope>TISSUE SPECIFICITY</scope>
    <scope>SUBCELLULAR LOCATION</scope>
    <scope>MUTAGENESIS OF SER-244</scope>
</reference>
<reference key="7">
    <citation type="journal article" date="2006" name="Hum. Genet.">
        <title>Disruptions of the novel KIAA1202 gene are associated with X-linked mental retardation.</title>
        <authorList>
            <person name="Hagens O."/>
            <person name="Dubos A."/>
            <person name="Abidi F."/>
            <person name="Barbi G."/>
            <person name="Van Zutven L."/>
            <person name="Hoeltzenbein M."/>
            <person name="Tommerup N."/>
            <person name="Moraine C."/>
            <person name="Fryns J.-P."/>
            <person name="Chelly J."/>
            <person name="van Bokhoven H."/>
            <person name="Gecz J."/>
            <person name="Dollfus H."/>
            <person name="Ropers H.-H."/>
            <person name="Schwartz C.E."/>
            <person name="de Cassia Stocco Dos Santos R."/>
            <person name="Kalscheuer V."/>
            <person name="Hanauer A."/>
        </authorList>
    </citation>
    <scope>CHROMOSOMAL TRANSLOCATION WITH SHROOM4</scope>
</reference>
<reference key="8">
    <citation type="journal article" date="2008" name="Mol. Biol. Cell">
        <title>FBXO25-associated nuclear domains: a novel subnuclear structure.</title>
        <authorList>
            <person name="Manfiolli A.O."/>
            <person name="Maragno A.L."/>
            <person name="Baqui M.M."/>
            <person name="Yokoo S."/>
            <person name="Teixeira F.R."/>
            <person name="Oliveira E.B."/>
            <person name="Gomes M.D."/>
        </authorList>
    </citation>
    <scope>SUBCELLULAR LOCATION</scope>
</reference>
<name>FBX25_HUMAN</name>
<accession>Q8TCJ0</accession>
<accession>Q6PJ83</accession>
<accession>Q7Z4V4</accession>
<accession>Q9UKB8</accession>